<protein>
    <recommendedName>
        <fullName evidence="12">Decaprenylphosphoryl-2-keto-beta-D-erythro-pentose reductase</fullName>
        <ecNumber evidence="1 14">1.1.1.333</ecNumber>
    </recommendedName>
    <alternativeName>
        <fullName evidence="12">Decaprenyl-phospho-2'-keto-D-arabinose reductase</fullName>
    </alternativeName>
    <alternativeName>
        <fullName evidence="12">Decaprenylphospho-beta-D-erythro-pentofuranosid-2-ulose 2-reductase</fullName>
    </alternativeName>
    <alternativeName>
        <fullName evidence="16">Decaprenylphosphoryl-beta-D-ribofuranose 2'-epimerase subunit DprE2</fullName>
        <shortName evidence="16">Decaprenyl-phosphoribose 2'-epimerase subunit 2</shortName>
    </alternativeName>
    <alternativeName>
        <fullName evidence="12">NAD-dependent decaprenylphosphoryl-D-2-keto-erythropentose reductase</fullName>
    </alternativeName>
</protein>
<gene>
    <name evidence="11" type="primary">dprE2</name>
    <name type="ordered locus">Rv3791</name>
    <name type="ORF">MTCY13D12.25</name>
</gene>
<comment type="function">
    <text evidence="4 5 7 8 9 16">Component of the DprE1-DprE2 complex that catalyzes the 2-step epimerization of decaprenyl-phospho-ribose (DPR) to decaprenyl-phospho-arabinose (DPA), a key precursor that serves as the arabinose donor required for the synthesis of cell-wall arabinans (PubMed:16291675, PubMed:19299584). DprE1 catalyzes the first step of epimerization, namely FAD-dependent oxidation of the C2' hydroxyl of DPR to yield the keto intermediate decaprenyl-phospho-2'-keto-D-arabinose (DPX) (PubMed:22733761). The intermediate DPX is then transferred to DprE2 subunit of the epimerase complex, most probably through a 'substrate channel' at the interface of DprE1-DprE2 complex (PubMed:25789990). DprE2 then catalyzes the second step of epimerization, the NAD(+)-dependent reduction of DPX that leads to the formation of DPA (PubMed:22733761, PubMed:25789990). Appears to be essential for the growth and survival of M.tuberculosis (PubMed:12657046, PubMed:24517327).</text>
</comment>
<comment type="catalytic activity">
    <reaction evidence="1 14">
        <text>trans,octa-cis-decaprenylphospho-beta-D-arabinofuranose + NAD(+) = trans,octa-cis-decaprenylphospho-beta-D-erythro-pentofuranosid-2-ulose + NADH + H(+)</text>
        <dbReference type="Rhea" id="RHEA:33895"/>
        <dbReference type="ChEBI" id="CHEBI:15378"/>
        <dbReference type="ChEBI" id="CHEBI:57540"/>
        <dbReference type="ChEBI" id="CHEBI:57945"/>
        <dbReference type="ChEBI" id="CHEBI:65066"/>
        <dbReference type="ChEBI" id="CHEBI:65067"/>
        <dbReference type="EC" id="1.1.1.333"/>
    </reaction>
</comment>
<comment type="pathway">
    <text evidence="13 15">Cell wall biogenesis; cell wall polysaccharide biosynthesis.</text>
</comment>
<comment type="subunit">
    <text evidence="10">Interacts with DprE1 to form an epimerase complex.</text>
</comment>
<comment type="subcellular location">
    <subcellularLocation>
        <location evidence="17">Periplasm</location>
    </subcellularLocation>
</comment>
<comment type="disruption phenotype">
    <text evidence="4 9">Traditional knockout mutant with dprE2 disruption could not be achieved, suggesting this gene is essential (PubMed:24517327). Conditional knock-down mutant of dprE2 show that down-regulation of DprE2 results in growth arrest in vitro (PubMed:24517327). Cells lacking this gene display impaired growth (PubMed:12657046).</text>
</comment>
<comment type="miscellaneous">
    <text evidence="6">Was identified as a high-confidence drug target.</text>
</comment>
<comment type="similarity">
    <text evidence="12">Belongs to the short-chain dehydrogenases/reductases (SDR) family.</text>
</comment>
<keyword id="KW-0961">Cell wall biogenesis/degradation</keyword>
<keyword id="KW-0520">NAD</keyword>
<keyword id="KW-0560">Oxidoreductase</keyword>
<keyword id="KW-0574">Periplasm</keyword>
<keyword id="KW-1185">Reference proteome</keyword>
<proteinExistence type="evidence at protein level"/>
<organism>
    <name type="scientific">Mycobacterium tuberculosis (strain ATCC 25618 / H37Rv)</name>
    <dbReference type="NCBI Taxonomy" id="83332"/>
    <lineage>
        <taxon>Bacteria</taxon>
        <taxon>Bacillati</taxon>
        <taxon>Actinomycetota</taxon>
        <taxon>Actinomycetes</taxon>
        <taxon>Mycobacteriales</taxon>
        <taxon>Mycobacteriaceae</taxon>
        <taxon>Mycobacterium</taxon>
        <taxon>Mycobacterium tuberculosis complex</taxon>
    </lineage>
</organism>
<accession>P9WGS9</accession>
<accession>L0TGS1</accession>
<accession>P66783</accession>
<accession>P72057</accession>
<reference key="1">
    <citation type="journal article" date="1998" name="Nature">
        <title>Deciphering the biology of Mycobacterium tuberculosis from the complete genome sequence.</title>
        <authorList>
            <person name="Cole S.T."/>
            <person name="Brosch R."/>
            <person name="Parkhill J."/>
            <person name="Garnier T."/>
            <person name="Churcher C.M."/>
            <person name="Harris D.E."/>
            <person name="Gordon S.V."/>
            <person name="Eiglmeier K."/>
            <person name="Gas S."/>
            <person name="Barry C.E. III"/>
            <person name="Tekaia F."/>
            <person name="Badcock K."/>
            <person name="Basham D."/>
            <person name="Brown D."/>
            <person name="Chillingworth T."/>
            <person name="Connor R."/>
            <person name="Davies R.M."/>
            <person name="Devlin K."/>
            <person name="Feltwell T."/>
            <person name="Gentles S."/>
            <person name="Hamlin N."/>
            <person name="Holroyd S."/>
            <person name="Hornsby T."/>
            <person name="Jagels K."/>
            <person name="Krogh A."/>
            <person name="McLean J."/>
            <person name="Moule S."/>
            <person name="Murphy L.D."/>
            <person name="Oliver S."/>
            <person name="Osborne J."/>
            <person name="Quail M.A."/>
            <person name="Rajandream M.A."/>
            <person name="Rogers J."/>
            <person name="Rutter S."/>
            <person name="Seeger K."/>
            <person name="Skelton S."/>
            <person name="Squares S."/>
            <person name="Squares R."/>
            <person name="Sulston J.E."/>
            <person name="Taylor K."/>
            <person name="Whitehead S."/>
            <person name="Barrell B.G."/>
        </authorList>
    </citation>
    <scope>NUCLEOTIDE SEQUENCE [LARGE SCALE GENOMIC DNA]</scope>
    <source>
        <strain>ATCC 25618 / H37Rv</strain>
    </source>
</reference>
<reference key="2">
    <citation type="journal article" date="2003" name="Mol. Microbiol.">
        <title>Genes required for mycobacterial growth defined by high density mutagenesis.</title>
        <authorList>
            <person name="Sassetti C.M."/>
            <person name="Boyd D.H."/>
            <person name="Rubin E.J."/>
        </authorList>
    </citation>
    <scope>DISRUPTION PHENOTYPE</scope>
    <source>
        <strain>ATCC 25618 / H37Rv</strain>
    </source>
</reference>
<reference key="3">
    <citation type="journal article" date="2005" name="J. Bacteriol.">
        <title>Decaprenylphosphoryl arabinofuranose, the donor of the D-arabinofuranosyl residues of mycobacterial arabinan, is formed via a two-step epimerization of decaprenylphosphoryl ribose.</title>
        <authorList>
            <person name="Mikusova K."/>
            <person name="Huang H."/>
            <person name="Yagi T."/>
            <person name="Holsters M."/>
            <person name="Vereecke D."/>
            <person name="D'Haeze W."/>
            <person name="Scherman M.S."/>
            <person name="Brennan P.J."/>
            <person name="McNeil M.R."/>
            <person name="Crick D.C."/>
        </authorList>
    </citation>
    <scope>FUNCTION IN DPR EPIMERIZATION</scope>
    <scope>PATHWAY</scope>
    <source>
        <strain>H37Rv</strain>
    </source>
</reference>
<reference key="4">
    <citation type="journal article" date="2008" name="BMC Syst. Biol.">
        <title>targetTB: a target identification pipeline for Mycobacterium tuberculosis through an interactome, reactome and genome-scale structural analysis.</title>
        <authorList>
            <person name="Raman K."/>
            <person name="Yeturu K."/>
            <person name="Chandra N."/>
        </authorList>
    </citation>
    <scope>IDENTIFICATION AS A DRUG TARGET [LARGE SCALE ANALYSIS]</scope>
</reference>
<reference key="5">
    <citation type="journal article" date="2009" name="Science">
        <title>Benzothiazinones kill Mycobacterium tuberculosis by blocking arabinan synthesis.</title>
        <authorList>
            <person name="Makarov V."/>
            <person name="Manina G."/>
            <person name="Mikusova K."/>
            <person name="Mollmann U."/>
            <person name="Ryabova O."/>
            <person name="Saint-Joanis B."/>
            <person name="Dhar N."/>
            <person name="Pasca M.R."/>
            <person name="Buroni S."/>
            <person name="Lucarelli A.P."/>
            <person name="Milano A."/>
            <person name="De Rossi E."/>
            <person name="Belanova M."/>
            <person name="Bobovska A."/>
            <person name="Dianiskova P."/>
            <person name="Kordulakova J."/>
            <person name="Sala C."/>
            <person name="Fullam E."/>
            <person name="Schneider P."/>
            <person name="McKinney J.D."/>
            <person name="Brodin P."/>
            <person name="Christophe T."/>
            <person name="Waddell S."/>
            <person name="Butcher P."/>
            <person name="Albrethsen J."/>
            <person name="Rosenkrands I."/>
            <person name="Brosch R."/>
            <person name="Nandi V."/>
            <person name="Bharath S."/>
            <person name="Gaonkar S."/>
            <person name="Shandil R.K."/>
            <person name="Balasubramanian V."/>
            <person name="Balganesh T."/>
            <person name="Tyagi S."/>
            <person name="Grosset J."/>
            <person name="Riccardi G."/>
            <person name="Cole S.T."/>
        </authorList>
    </citation>
    <scope>FUNCTION IN DPR EPIMERIZATION</scope>
</reference>
<reference key="6">
    <citation type="journal article" date="2011" name="Mol. Cell. Proteomics">
        <title>Proteogenomic analysis of Mycobacterium tuberculosis by high resolution mass spectrometry.</title>
        <authorList>
            <person name="Kelkar D.S."/>
            <person name="Kumar D."/>
            <person name="Kumar P."/>
            <person name="Balakrishnan L."/>
            <person name="Muthusamy B."/>
            <person name="Yadav A.K."/>
            <person name="Shrivastava P."/>
            <person name="Marimuthu A."/>
            <person name="Anand S."/>
            <person name="Sundaram H."/>
            <person name="Kingsbury R."/>
            <person name="Harsha H.C."/>
            <person name="Nair B."/>
            <person name="Prasad T.S."/>
            <person name="Chauhan D.S."/>
            <person name="Katoch K."/>
            <person name="Katoch V.M."/>
            <person name="Kumar P."/>
            <person name="Chaerkady R."/>
            <person name="Ramachandran S."/>
            <person name="Dash D."/>
            <person name="Pandey A."/>
        </authorList>
    </citation>
    <scope>IDENTIFICATION BY MASS SPECTROMETRY [LARGE SCALE ANALYSIS]</scope>
    <source>
        <strain>ATCC 25618 / H37Rv</strain>
    </source>
</reference>
<reference key="7">
    <citation type="journal article" date="2012" name="Proc. Natl. Acad. Sci. U.S.A.">
        <title>Structural basis of inhibition of Mycobacterium tuberculosis DprE1 by benzothiazinone inhibitors.</title>
        <authorList>
            <person name="Batt S.M."/>
            <person name="Jabeen T."/>
            <person name="Bhowruth V."/>
            <person name="Quill L."/>
            <person name="Lund P.A."/>
            <person name="Eggeling L."/>
            <person name="Alderwick L.J."/>
            <person name="Futterer K."/>
            <person name="Besra G.S."/>
        </authorList>
    </citation>
    <scope>FUNCTION</scope>
    <scope>CATALYTIC ACTIVITY</scope>
</reference>
<reference key="8">
    <citation type="journal article" date="2014" name="Mol. Microbiol.">
        <title>Assessing the essentiality of the decaprenyl-phospho-D-arabinofuranose pathway in Mycobacterium tuberculosis using conditional mutants.</title>
        <authorList>
            <person name="Kolly G.S."/>
            <person name="Boldrin F."/>
            <person name="Sala C."/>
            <person name="Dhar N."/>
            <person name="Hartkoorn R.C."/>
            <person name="Ventura M."/>
            <person name="Serafini A."/>
            <person name="McKinney J.D."/>
            <person name="Manganelli R."/>
            <person name="Cole S.T."/>
        </authorList>
    </citation>
    <scope>DISRUPTION PHENOTYPE</scope>
    <scope>PATHWAY</scope>
    <source>
        <strain>H37Rv</strain>
    </source>
</reference>
<reference key="9">
    <citation type="journal article" date="2015" name="ACS Chem. Biol.">
        <title>DprE1 is a vulnerable tuberculosis drug target due to its cell wall localization.</title>
        <authorList>
            <person name="Brecik M."/>
            <person name="Centarova I."/>
            <person name="Mukherjee R."/>
            <person name="Kolly G.S."/>
            <person name="Huszar S."/>
            <person name="Bobovska A."/>
            <person name="Kilacskova E."/>
            <person name="Mokosova V."/>
            <person name="Svetlikova Z."/>
            <person name="Sarkan M."/>
            <person name="Neres J."/>
            <person name="Kordulakova J."/>
            <person name="Cole S.T."/>
            <person name="Mikusova K."/>
        </authorList>
    </citation>
    <scope>SUBCELLULAR LOCATION</scope>
    <source>
        <strain>H37Rv</strain>
    </source>
</reference>
<reference key="10">
    <citation type="journal article" date="2015" name="PLoS ONE">
        <title>Structure, dynamics, and interaction of Mycobacterium tuberculosis (Mtb) DprE1 and DprE2 examined by molecular modeling, simulation, and electrostatic studies.</title>
        <authorList>
            <person name="Bhutani I."/>
            <person name="Loharch S."/>
            <person name="Gupta P."/>
            <person name="Madathil R."/>
            <person name="Parkesh R."/>
        </authorList>
    </citation>
    <scope>INTERACTION WITH DPRE1</scope>
    <scope>3D-STRUCTURE MODELING</scope>
</reference>
<evidence type="ECO:0000250" key="1">
    <source>
        <dbReference type="UniProtKB" id="A0R610"/>
    </source>
</evidence>
<evidence type="ECO:0000250" key="2">
    <source>
        <dbReference type="UniProtKB" id="P00334"/>
    </source>
</evidence>
<evidence type="ECO:0000255" key="3">
    <source>
        <dbReference type="PROSITE-ProRule" id="PRU10001"/>
    </source>
</evidence>
<evidence type="ECO:0000269" key="4">
    <source>
    </source>
</evidence>
<evidence type="ECO:0000269" key="5">
    <source>
    </source>
</evidence>
<evidence type="ECO:0000269" key="6">
    <source>
    </source>
</evidence>
<evidence type="ECO:0000269" key="7">
    <source>
    </source>
</evidence>
<evidence type="ECO:0000269" key="8">
    <source>
    </source>
</evidence>
<evidence type="ECO:0000269" key="9">
    <source>
    </source>
</evidence>
<evidence type="ECO:0000269" key="10">
    <source>
    </source>
</evidence>
<evidence type="ECO:0000303" key="11">
    <source>
    </source>
</evidence>
<evidence type="ECO:0000305" key="12"/>
<evidence type="ECO:0000305" key="13">
    <source>
    </source>
</evidence>
<evidence type="ECO:0000305" key="14">
    <source>
    </source>
</evidence>
<evidence type="ECO:0000305" key="15">
    <source>
    </source>
</evidence>
<evidence type="ECO:0000305" key="16">
    <source>
    </source>
</evidence>
<evidence type="ECO:0000305" key="17">
    <source>
    </source>
</evidence>
<feature type="chain" id="PRO_0000054860" description="Decaprenylphosphoryl-2-keto-beta-D-erythro-pentose reductase">
    <location>
        <begin position="1"/>
        <end position="254"/>
    </location>
</feature>
<feature type="active site" description="Proton acceptor" evidence="3">
    <location>
        <position position="160"/>
    </location>
</feature>
<feature type="binding site" evidence="2">
    <location>
        <position position="67"/>
    </location>
    <ligand>
        <name>NAD(+)</name>
        <dbReference type="ChEBI" id="CHEBI:57540"/>
    </ligand>
</feature>
<feature type="binding site" evidence="2">
    <location>
        <position position="164"/>
    </location>
    <ligand>
        <name>NAD(+)</name>
        <dbReference type="ChEBI" id="CHEBI:57540"/>
    </ligand>
</feature>
<sequence>MVLDAVGNPQTVLLLGGTSEIGLAICERYLHNSAARIVLACLPDDPRREDAAAAMKQAGARSVELIDFDALDTDSHPKMIEAAFSGGDVDVAIVAFGLLGDAEELWQNQRKAVQIAEINYTAAVSVGVLLAEKMRAQGFGQIIAMSSAAGERVRRANFVYGSTKAGLDGFYLGLSEALREYGVRVLVIRPGQVRTRMSAHLKEAPLTVDKEYVANLAVTASAKGKELVWAPAAFRYVMMVLRHIPRSIFRKLPI</sequence>
<name>DPRE2_MYCTU</name>
<dbReference type="EC" id="1.1.1.333" evidence="1 14"/>
<dbReference type="EMBL" id="AL123456">
    <property type="protein sequence ID" value="CCP46620.1"/>
    <property type="molecule type" value="Genomic_DNA"/>
</dbReference>
<dbReference type="PIR" id="C70697">
    <property type="entry name" value="C70697"/>
</dbReference>
<dbReference type="RefSeq" id="NP_218308.1">
    <property type="nucleotide sequence ID" value="NC_000962.3"/>
</dbReference>
<dbReference type="RefSeq" id="WP_003420632.1">
    <property type="nucleotide sequence ID" value="NZ_NVQJ01000009.1"/>
</dbReference>
<dbReference type="SMR" id="P9WGS9"/>
<dbReference type="FunCoup" id="P9WGS9">
    <property type="interactions" value="1"/>
</dbReference>
<dbReference type="STRING" id="83332.Rv3791"/>
<dbReference type="PaxDb" id="83332-Rv3791"/>
<dbReference type="DNASU" id="886124"/>
<dbReference type="GeneID" id="886124"/>
<dbReference type="KEGG" id="mtu:Rv3791"/>
<dbReference type="KEGG" id="mtv:RVBD_3791"/>
<dbReference type="TubercuList" id="Rv3791"/>
<dbReference type="eggNOG" id="COG1028">
    <property type="taxonomic scope" value="Bacteria"/>
</dbReference>
<dbReference type="InParanoid" id="P9WGS9"/>
<dbReference type="OrthoDB" id="5115951at2"/>
<dbReference type="PhylomeDB" id="P9WGS9"/>
<dbReference type="BioCyc" id="MetaCyc:G185E-8087-MONOMER"/>
<dbReference type="BRENDA" id="1.1.1.333">
    <property type="organism ID" value="3445"/>
</dbReference>
<dbReference type="UniPathway" id="UPA00963"/>
<dbReference type="Proteomes" id="UP000001584">
    <property type="component" value="Chromosome"/>
</dbReference>
<dbReference type="GO" id="GO:0042597">
    <property type="term" value="C:periplasmic space"/>
    <property type="evidence" value="ECO:0007669"/>
    <property type="project" value="UniProtKB-SubCell"/>
</dbReference>
<dbReference type="GO" id="GO:0005886">
    <property type="term" value="C:plasma membrane"/>
    <property type="evidence" value="ECO:0007005"/>
    <property type="project" value="MTBBASE"/>
</dbReference>
<dbReference type="GO" id="GO:0016491">
    <property type="term" value="F:oxidoreductase activity"/>
    <property type="evidence" value="ECO:0007669"/>
    <property type="project" value="UniProtKB-KW"/>
</dbReference>
<dbReference type="GO" id="GO:0035884">
    <property type="term" value="P:arabinan biosynthetic process"/>
    <property type="evidence" value="ECO:0000314"/>
    <property type="project" value="MTBBASE"/>
</dbReference>
<dbReference type="GO" id="GO:0045227">
    <property type="term" value="P:capsule polysaccharide biosynthetic process"/>
    <property type="evidence" value="ECO:0007669"/>
    <property type="project" value="UniProtKB-UniPathway"/>
</dbReference>
<dbReference type="GO" id="GO:0071555">
    <property type="term" value="P:cell wall organization"/>
    <property type="evidence" value="ECO:0007669"/>
    <property type="project" value="UniProtKB-KW"/>
</dbReference>
<dbReference type="GO" id="GO:0070592">
    <property type="term" value="P:cell wall polysaccharide biosynthetic process"/>
    <property type="evidence" value="ECO:0000314"/>
    <property type="project" value="MTBBASE"/>
</dbReference>
<dbReference type="CDD" id="cd05233">
    <property type="entry name" value="SDR_c"/>
    <property type="match status" value="1"/>
</dbReference>
<dbReference type="FunFam" id="3.40.50.720:FF:000419">
    <property type="entry name" value="Decaprenylphosphoryl-D-2-keto erythropentose reductase"/>
    <property type="match status" value="1"/>
</dbReference>
<dbReference type="Gene3D" id="3.40.50.720">
    <property type="entry name" value="NAD(P)-binding Rossmann-like Domain"/>
    <property type="match status" value="1"/>
</dbReference>
<dbReference type="InterPro" id="IPR036291">
    <property type="entry name" value="NAD(P)-bd_dom_sf"/>
</dbReference>
<dbReference type="InterPro" id="IPR020904">
    <property type="entry name" value="Sc_DH/Rdtase_CS"/>
</dbReference>
<dbReference type="InterPro" id="IPR002347">
    <property type="entry name" value="SDR_fam"/>
</dbReference>
<dbReference type="NCBIfam" id="NF005912">
    <property type="entry name" value="PRK07904.1"/>
    <property type="match status" value="1"/>
</dbReference>
<dbReference type="PANTHER" id="PTHR43669">
    <property type="entry name" value="5-KETO-D-GLUCONATE 5-REDUCTASE"/>
    <property type="match status" value="1"/>
</dbReference>
<dbReference type="PANTHER" id="PTHR43669:SF6">
    <property type="entry name" value="DECAPRENYLPHOSPHORYL-2-KETO-BETA-D-ERYTHRO-PENTOSE REDUCTASE"/>
    <property type="match status" value="1"/>
</dbReference>
<dbReference type="Pfam" id="PF00106">
    <property type="entry name" value="adh_short"/>
    <property type="match status" value="1"/>
</dbReference>
<dbReference type="PRINTS" id="PR00081">
    <property type="entry name" value="GDHRDH"/>
</dbReference>
<dbReference type="SUPFAM" id="SSF51735">
    <property type="entry name" value="NAD(P)-binding Rossmann-fold domains"/>
    <property type="match status" value="1"/>
</dbReference>
<dbReference type="PROSITE" id="PS00061">
    <property type="entry name" value="ADH_SHORT"/>
    <property type="match status" value="1"/>
</dbReference>